<feature type="chain" id="PRO_0000275939" description="Photosystem I P700 chlorophyll a apoprotein A1">
    <location>
        <begin position="1"/>
        <end position="750"/>
    </location>
</feature>
<feature type="transmembrane region" description="Helical; Name=I" evidence="1">
    <location>
        <begin position="70"/>
        <end position="93"/>
    </location>
</feature>
<feature type="transmembrane region" description="Helical; Name=II" evidence="1">
    <location>
        <begin position="156"/>
        <end position="179"/>
    </location>
</feature>
<feature type="transmembrane region" description="Helical; Name=III" evidence="1">
    <location>
        <begin position="195"/>
        <end position="219"/>
    </location>
</feature>
<feature type="transmembrane region" description="Helical; Name=IV" evidence="1">
    <location>
        <begin position="291"/>
        <end position="309"/>
    </location>
</feature>
<feature type="transmembrane region" description="Helical; Name=V" evidence="1">
    <location>
        <begin position="346"/>
        <end position="369"/>
    </location>
</feature>
<feature type="transmembrane region" description="Helical; Name=VI" evidence="1">
    <location>
        <begin position="385"/>
        <end position="411"/>
    </location>
</feature>
<feature type="transmembrane region" description="Helical; Name=VII" evidence="1">
    <location>
        <begin position="433"/>
        <end position="455"/>
    </location>
</feature>
<feature type="transmembrane region" description="Helical; Name=VIII" evidence="1">
    <location>
        <begin position="531"/>
        <end position="549"/>
    </location>
</feature>
<feature type="transmembrane region" description="Helical; Name=IX" evidence="1">
    <location>
        <begin position="589"/>
        <end position="610"/>
    </location>
</feature>
<feature type="transmembrane region" description="Helical; Name=X" evidence="1">
    <location>
        <begin position="664"/>
        <end position="686"/>
    </location>
</feature>
<feature type="transmembrane region" description="Helical; Name=XI" evidence="1">
    <location>
        <begin position="724"/>
        <end position="744"/>
    </location>
</feature>
<feature type="binding site" evidence="1">
    <location>
        <position position="573"/>
    </location>
    <ligand>
        <name>[4Fe-4S] cluster</name>
        <dbReference type="ChEBI" id="CHEBI:49883"/>
        <note>ligand shared between dimeric partners</note>
    </ligand>
</feature>
<feature type="binding site" evidence="1">
    <location>
        <position position="582"/>
    </location>
    <ligand>
        <name>[4Fe-4S] cluster</name>
        <dbReference type="ChEBI" id="CHEBI:49883"/>
        <note>ligand shared between dimeric partners</note>
    </ligand>
</feature>
<feature type="binding site" description="axial binding residue" evidence="1">
    <location>
        <position position="675"/>
    </location>
    <ligand>
        <name>chlorophyll a'</name>
        <dbReference type="ChEBI" id="CHEBI:189419"/>
        <label>A1</label>
    </ligand>
    <ligandPart>
        <name>Mg</name>
        <dbReference type="ChEBI" id="CHEBI:25107"/>
    </ligandPart>
</feature>
<feature type="binding site" description="axial binding residue" evidence="1">
    <location>
        <position position="683"/>
    </location>
    <ligand>
        <name>chlorophyll a</name>
        <dbReference type="ChEBI" id="CHEBI:58416"/>
        <label>A3</label>
    </ligand>
    <ligandPart>
        <name>Mg</name>
        <dbReference type="ChEBI" id="CHEBI:25107"/>
    </ligandPart>
</feature>
<feature type="binding site" evidence="1">
    <location>
        <position position="691"/>
    </location>
    <ligand>
        <name>chlorophyll a</name>
        <dbReference type="ChEBI" id="CHEBI:58416"/>
        <label>A3</label>
    </ligand>
</feature>
<feature type="binding site" evidence="1">
    <location>
        <position position="692"/>
    </location>
    <ligand>
        <name>phylloquinone</name>
        <dbReference type="ChEBI" id="CHEBI:18067"/>
        <label>A</label>
    </ligand>
</feature>
<accession>A0A335</accession>
<gene>
    <name evidence="1" type="primary">psaA</name>
</gene>
<evidence type="ECO:0000255" key="1">
    <source>
        <dbReference type="HAMAP-Rule" id="MF_00458"/>
    </source>
</evidence>
<keyword id="KW-0004">4Fe-4S</keyword>
<keyword id="KW-0148">Chlorophyll</keyword>
<keyword id="KW-0150">Chloroplast</keyword>
<keyword id="KW-0157">Chromophore</keyword>
<keyword id="KW-0249">Electron transport</keyword>
<keyword id="KW-0408">Iron</keyword>
<keyword id="KW-0411">Iron-sulfur</keyword>
<keyword id="KW-0460">Magnesium</keyword>
<keyword id="KW-0472">Membrane</keyword>
<keyword id="KW-0479">Metal-binding</keyword>
<keyword id="KW-0560">Oxidoreductase</keyword>
<keyword id="KW-0602">Photosynthesis</keyword>
<keyword id="KW-0603">Photosystem I</keyword>
<keyword id="KW-0934">Plastid</keyword>
<keyword id="KW-1185">Reference proteome</keyword>
<keyword id="KW-0793">Thylakoid</keyword>
<keyword id="KW-0812">Transmembrane</keyword>
<keyword id="KW-1133">Transmembrane helix</keyword>
<keyword id="KW-0813">Transport</keyword>
<reference key="1">
    <citation type="journal article" date="2007" name="Plant Biotechnol. J.">
        <title>The complete nucleotide sequence of the coffee (Coffea arabica L.) chloroplast genome: organization and implications for biotechnology and phylogenetic relationships amongst angiosperms.</title>
        <authorList>
            <person name="Samson N."/>
            <person name="Bausher M.G."/>
            <person name="Lee S.-B."/>
            <person name="Jansen R.K."/>
            <person name="Daniell H."/>
        </authorList>
    </citation>
    <scope>NUCLEOTIDE SEQUENCE [LARGE SCALE GENOMIC DNA]</scope>
</reference>
<sequence length="750" mass="83059">MIIRSPEPEVKILVDRDPVKTSFEEWAKPGHFSRTIAKGPDTTTWIWNLHADAHDFDSHTSDLEEISRKVFSAHFGQLSIIFLWLSGMYFHGARFSNYEAWLSDPTHIGPSAQVVWPIVGQEILNGDVGGGFRGIQITSGFFQIWRASGITNELQLYCTAIGALIFAALMLFAGWFHYHKAAPKLAWFQDVESMLNHHLAGLLGLGSLSWAGHQVHVSLPINQFLNAGVDPKEIPLPHEFILNRDLLAQLYPSFAEGATPFFTLNWSKYAEFLTFRGGLDPVTGGLWLTDIAHHHLAIAILFLIAGHMYRTNWGIGHGLKDILEAHKGPFTGQGHKGLYEILTTSWHAQLSLNLAMLGSLTIVVAHHMYSMPPYPYLATDYGTQLSLFTHHMWIGGFLIVGAAAHAAIFMVRDYDPTTRYNDLLDRVLRHRDAIISHLNWACIFLGFHSFGLYIHNDTMSALGRPQDMFSDTAIQLQPVFAQWIQNTHALAPGATAPGATASTSLTWGGGDLVAVGGKVALLPIPLGTADFLVHHIHAFTIHVTVLILLKGVLFARSSRLIPDKANLGFRFPCDGPGRGGTCQVSAWDHVFLGLFWMYNAISVVIFHFSWKMQSDVWGSISDQGVVTHITGGNFAQSSITINGWLRDFLWAQASQVIQSYGSSLSAYGLFFLGAHFVWAFSLMFLFSGRGYWQELIESIVWAHNKLKVAPATQPRALSIVQGRAVGVTHYLLGGIATTWAFFLARIIAVG</sequence>
<name>PSAA_COFAR</name>
<protein>
    <recommendedName>
        <fullName evidence="1">Photosystem I P700 chlorophyll a apoprotein A1</fullName>
        <ecNumber evidence="1">1.97.1.12</ecNumber>
    </recommendedName>
    <alternativeName>
        <fullName evidence="1">PSI-A</fullName>
    </alternativeName>
    <alternativeName>
        <fullName evidence="1">PsaA</fullName>
    </alternativeName>
</protein>
<comment type="function">
    <text>PsaA and PsaB bind P700, the primary electron donor of photosystem I (PSI), as well as the electron acceptors A0, A1 and FX. PSI is a plastocyanin-ferredoxin oxidoreductase, converting photonic excitation into a charge separation, which transfers an electron from the donor P700 chlorophyll pair to the spectroscopically characterized acceptors A0, A1, FX, FA and FB in turn. Oxidized P700 is reduced on the lumenal side of the thylakoid membrane by plastocyanin.</text>
</comment>
<comment type="catalytic activity">
    <reaction evidence="1">
        <text>reduced [plastocyanin] + hnu + oxidized [2Fe-2S]-[ferredoxin] = oxidized [plastocyanin] + reduced [2Fe-2S]-[ferredoxin]</text>
        <dbReference type="Rhea" id="RHEA:30407"/>
        <dbReference type="Rhea" id="RHEA-COMP:10000"/>
        <dbReference type="Rhea" id="RHEA-COMP:10001"/>
        <dbReference type="Rhea" id="RHEA-COMP:10039"/>
        <dbReference type="Rhea" id="RHEA-COMP:10040"/>
        <dbReference type="ChEBI" id="CHEBI:29036"/>
        <dbReference type="ChEBI" id="CHEBI:30212"/>
        <dbReference type="ChEBI" id="CHEBI:33737"/>
        <dbReference type="ChEBI" id="CHEBI:33738"/>
        <dbReference type="ChEBI" id="CHEBI:49552"/>
        <dbReference type="EC" id="1.97.1.12"/>
    </reaction>
</comment>
<comment type="cofactor">
    <text evidence="1">P700 is a chlorophyll a/chlorophyll a' dimer, A0 is one or more chlorophyll a, A1 is one or both phylloquinones and FX is a shared 4Fe-4S iron-sulfur center.</text>
</comment>
<comment type="subunit">
    <text evidence="1">The PsaA/B heterodimer binds the P700 chlorophyll special pair and subsequent electron acceptors. PSI consists of a core antenna complex that captures photons, and an electron transfer chain that converts photonic excitation into a charge separation. The eukaryotic PSI reaction center is composed of at least 11 subunits.</text>
</comment>
<comment type="subcellular location">
    <subcellularLocation>
        <location evidence="1">Plastid</location>
        <location evidence="1">Chloroplast thylakoid membrane</location>
        <topology evidence="1">Multi-pass membrane protein</topology>
    </subcellularLocation>
</comment>
<comment type="similarity">
    <text evidence="1">Belongs to the PsaA/PsaB family.</text>
</comment>
<geneLocation type="chloroplast"/>
<organism>
    <name type="scientific">Coffea arabica</name>
    <name type="common">Arabian coffee</name>
    <dbReference type="NCBI Taxonomy" id="13443"/>
    <lineage>
        <taxon>Eukaryota</taxon>
        <taxon>Viridiplantae</taxon>
        <taxon>Streptophyta</taxon>
        <taxon>Embryophyta</taxon>
        <taxon>Tracheophyta</taxon>
        <taxon>Spermatophyta</taxon>
        <taxon>Magnoliopsida</taxon>
        <taxon>eudicotyledons</taxon>
        <taxon>Gunneridae</taxon>
        <taxon>Pentapetalae</taxon>
        <taxon>asterids</taxon>
        <taxon>lamiids</taxon>
        <taxon>Gentianales</taxon>
        <taxon>Rubiaceae</taxon>
        <taxon>Ixoroideae</taxon>
        <taxon>Gardenieae complex</taxon>
        <taxon>Bertiereae - Coffeeae clade</taxon>
        <taxon>Coffeeae</taxon>
        <taxon>Coffea</taxon>
    </lineage>
</organism>
<proteinExistence type="inferred from homology"/>
<dbReference type="EC" id="1.97.1.12" evidence="1"/>
<dbReference type="EMBL" id="EF044213">
    <property type="protein sequence ID" value="ABJ89679.1"/>
    <property type="molecule type" value="Genomic_DNA"/>
</dbReference>
<dbReference type="RefSeq" id="YP_817482.1">
    <property type="nucleotide sequence ID" value="NC_008535.1"/>
</dbReference>
<dbReference type="SMR" id="A0A335"/>
<dbReference type="GeneID" id="4421876"/>
<dbReference type="OrthoDB" id="349at2759"/>
<dbReference type="Proteomes" id="UP000515148">
    <property type="component" value="Chloroplast Pltd"/>
</dbReference>
<dbReference type="GO" id="GO:0009535">
    <property type="term" value="C:chloroplast thylakoid membrane"/>
    <property type="evidence" value="ECO:0007669"/>
    <property type="project" value="UniProtKB-SubCell"/>
</dbReference>
<dbReference type="GO" id="GO:0009522">
    <property type="term" value="C:photosystem I"/>
    <property type="evidence" value="ECO:0007669"/>
    <property type="project" value="UniProtKB-KW"/>
</dbReference>
<dbReference type="GO" id="GO:0051539">
    <property type="term" value="F:4 iron, 4 sulfur cluster binding"/>
    <property type="evidence" value="ECO:0007669"/>
    <property type="project" value="UniProtKB-KW"/>
</dbReference>
<dbReference type="GO" id="GO:0016168">
    <property type="term" value="F:chlorophyll binding"/>
    <property type="evidence" value="ECO:0007669"/>
    <property type="project" value="UniProtKB-KW"/>
</dbReference>
<dbReference type="GO" id="GO:0009055">
    <property type="term" value="F:electron transfer activity"/>
    <property type="evidence" value="ECO:0007669"/>
    <property type="project" value="UniProtKB-UniRule"/>
</dbReference>
<dbReference type="GO" id="GO:0000287">
    <property type="term" value="F:magnesium ion binding"/>
    <property type="evidence" value="ECO:0007669"/>
    <property type="project" value="UniProtKB-UniRule"/>
</dbReference>
<dbReference type="GO" id="GO:0016491">
    <property type="term" value="F:oxidoreductase activity"/>
    <property type="evidence" value="ECO:0007669"/>
    <property type="project" value="UniProtKB-KW"/>
</dbReference>
<dbReference type="GO" id="GO:0015979">
    <property type="term" value="P:photosynthesis"/>
    <property type="evidence" value="ECO:0007669"/>
    <property type="project" value="UniProtKB-UniRule"/>
</dbReference>
<dbReference type="FunFam" id="1.20.1130.10:FF:000001">
    <property type="entry name" value="Photosystem I P700 chlorophyll a apoprotein A2"/>
    <property type="match status" value="1"/>
</dbReference>
<dbReference type="Gene3D" id="1.20.1130.10">
    <property type="entry name" value="Photosystem I PsaA/PsaB"/>
    <property type="match status" value="1"/>
</dbReference>
<dbReference type="HAMAP" id="MF_00458">
    <property type="entry name" value="PSI_PsaA"/>
    <property type="match status" value="1"/>
</dbReference>
<dbReference type="InterPro" id="IPR006243">
    <property type="entry name" value="PSI_PsaA"/>
</dbReference>
<dbReference type="InterPro" id="IPR001280">
    <property type="entry name" value="PSI_PsaA/B"/>
</dbReference>
<dbReference type="InterPro" id="IPR020586">
    <property type="entry name" value="PSI_PsaA/B_CS"/>
</dbReference>
<dbReference type="InterPro" id="IPR036408">
    <property type="entry name" value="PSI_PsaA/B_sf"/>
</dbReference>
<dbReference type="NCBIfam" id="TIGR01335">
    <property type="entry name" value="psaA"/>
    <property type="match status" value="1"/>
</dbReference>
<dbReference type="PANTHER" id="PTHR30128">
    <property type="entry name" value="OUTER MEMBRANE PROTEIN, OMPA-RELATED"/>
    <property type="match status" value="1"/>
</dbReference>
<dbReference type="PANTHER" id="PTHR30128:SF19">
    <property type="entry name" value="PHOTOSYSTEM I P700 CHLOROPHYLL A APOPROTEIN A1-RELATED"/>
    <property type="match status" value="1"/>
</dbReference>
<dbReference type="Pfam" id="PF00223">
    <property type="entry name" value="PsaA_PsaB"/>
    <property type="match status" value="1"/>
</dbReference>
<dbReference type="PIRSF" id="PIRSF002905">
    <property type="entry name" value="PSI_A"/>
    <property type="match status" value="1"/>
</dbReference>
<dbReference type="PRINTS" id="PR00257">
    <property type="entry name" value="PHOTSYSPSAAB"/>
</dbReference>
<dbReference type="SUPFAM" id="SSF81558">
    <property type="entry name" value="Photosystem I subunits PsaA/PsaB"/>
    <property type="match status" value="1"/>
</dbReference>
<dbReference type="PROSITE" id="PS00419">
    <property type="entry name" value="PHOTOSYSTEM_I_PSAAB"/>
    <property type="match status" value="1"/>
</dbReference>